<name>F90AR_HUMAN</name>
<sequence>MARHSVHHQAQRPPRAKNPQEQQRRPMGQTTLPAEQEESRVKCKNCGAFGHSARSKTCPIKRWSGALPLQALGSHKEKENLKPAKAQLPFTTPGPFTTNDREKERSPSPQQQQSEAPTQTFPRTPQEKMQEAWKEPAEDCLFLRHPTMPLPVHTTKKRSVLGPVSTGPPPVNKPEMRLLCPSGHNDSPQLSTCGPTKGHGRDVTASLLPVLKSSHQTPTLSARLPANRPDMSSHGALQPAMQALALGPGLKSQAEIKHPDADAKPRPQQVRKQCGQDSRTQAPDKEPAPVPTQTFQNPAKKARFSSFQTPALRTQLPDVGAVQTLQPPRTATGLGSKEAPKATAETAATKTATLQPRVNLQPAPSSPFLGPAQGCPVLQPGPPIHVPGRPGSVTFMRGDKGQKSPRFRMPPTSRPPENSASAQSPRFSRQPEGQGPQVSTSVLYEDLLVTSSSEDSDSD</sequence>
<proteinExistence type="evidence at protein level"/>
<reference key="1">
    <citation type="journal article" date="2004" name="Nature">
        <title>The DNA sequence and biology of human chromosome 19.</title>
        <authorList>
            <person name="Grimwood J."/>
            <person name="Gordon L.A."/>
            <person name="Olsen A.S."/>
            <person name="Terry A."/>
            <person name="Schmutz J."/>
            <person name="Lamerdin J.E."/>
            <person name="Hellsten U."/>
            <person name="Goodstein D."/>
            <person name="Couronne O."/>
            <person name="Tran-Gyamfi M."/>
            <person name="Aerts A."/>
            <person name="Altherr M."/>
            <person name="Ashworth L."/>
            <person name="Bajorek E."/>
            <person name="Black S."/>
            <person name="Branscomb E."/>
            <person name="Caenepeel S."/>
            <person name="Carrano A.V."/>
            <person name="Caoile C."/>
            <person name="Chan Y.M."/>
            <person name="Christensen M."/>
            <person name="Cleland C.A."/>
            <person name="Copeland A."/>
            <person name="Dalin E."/>
            <person name="Dehal P."/>
            <person name="Denys M."/>
            <person name="Detter J.C."/>
            <person name="Escobar J."/>
            <person name="Flowers D."/>
            <person name="Fotopulos D."/>
            <person name="Garcia C."/>
            <person name="Georgescu A.M."/>
            <person name="Glavina T."/>
            <person name="Gomez M."/>
            <person name="Gonzales E."/>
            <person name="Groza M."/>
            <person name="Hammon N."/>
            <person name="Hawkins T."/>
            <person name="Haydu L."/>
            <person name="Ho I."/>
            <person name="Huang W."/>
            <person name="Israni S."/>
            <person name="Jett J."/>
            <person name="Kadner K."/>
            <person name="Kimball H."/>
            <person name="Kobayashi A."/>
            <person name="Larionov V."/>
            <person name="Leem S.-H."/>
            <person name="Lopez F."/>
            <person name="Lou Y."/>
            <person name="Lowry S."/>
            <person name="Malfatti S."/>
            <person name="Martinez D."/>
            <person name="McCready P.M."/>
            <person name="Medina C."/>
            <person name="Morgan J."/>
            <person name="Nelson K."/>
            <person name="Nolan M."/>
            <person name="Ovcharenko I."/>
            <person name="Pitluck S."/>
            <person name="Pollard M."/>
            <person name="Popkie A.P."/>
            <person name="Predki P."/>
            <person name="Quan G."/>
            <person name="Ramirez L."/>
            <person name="Rash S."/>
            <person name="Retterer J."/>
            <person name="Rodriguez A."/>
            <person name="Rogers S."/>
            <person name="Salamov A."/>
            <person name="Salazar A."/>
            <person name="She X."/>
            <person name="Smith D."/>
            <person name="Slezak T."/>
            <person name="Solovyev V."/>
            <person name="Thayer N."/>
            <person name="Tice H."/>
            <person name="Tsai M."/>
            <person name="Ustaszewska A."/>
            <person name="Vo N."/>
            <person name="Wagner M."/>
            <person name="Wheeler J."/>
            <person name="Wu K."/>
            <person name="Xie G."/>
            <person name="Yang J."/>
            <person name="Dubchak I."/>
            <person name="Furey T.S."/>
            <person name="DeJong P."/>
            <person name="Dickson M."/>
            <person name="Gordon D."/>
            <person name="Eichler E.E."/>
            <person name="Pennacchio L.A."/>
            <person name="Richardson P."/>
            <person name="Stubbs L."/>
            <person name="Rokhsar D.S."/>
            <person name="Myers R.M."/>
            <person name="Rubin E.M."/>
            <person name="Lucas S.M."/>
        </authorList>
    </citation>
    <scope>NUCLEOTIDE SEQUENCE [LARGE SCALE GENOMIC DNA]</scope>
</reference>
<comment type="similarity">
    <text evidence="2">Belongs to the FAM90 family.</text>
</comment>
<keyword id="KW-1267">Proteomics identification</keyword>
<keyword id="KW-1185">Reference proteome</keyword>
<evidence type="ECO:0000256" key="1">
    <source>
        <dbReference type="SAM" id="MobiDB-lite"/>
    </source>
</evidence>
<evidence type="ECO:0000305" key="2"/>
<gene>
    <name type="primary">FAM90A27P</name>
</gene>
<protein>
    <recommendedName>
        <fullName>Protein FAM90A27P</fullName>
    </recommendedName>
</protein>
<organism>
    <name type="scientific">Homo sapiens</name>
    <name type="common">Human</name>
    <dbReference type="NCBI Taxonomy" id="9606"/>
    <lineage>
        <taxon>Eukaryota</taxon>
        <taxon>Metazoa</taxon>
        <taxon>Chordata</taxon>
        <taxon>Craniata</taxon>
        <taxon>Vertebrata</taxon>
        <taxon>Euteleostomi</taxon>
        <taxon>Mammalia</taxon>
        <taxon>Eutheria</taxon>
        <taxon>Euarchontoglires</taxon>
        <taxon>Primates</taxon>
        <taxon>Haplorrhini</taxon>
        <taxon>Catarrhini</taxon>
        <taxon>Hominidae</taxon>
        <taxon>Homo</taxon>
    </lineage>
</organism>
<accession>A6NNH2</accession>
<dbReference type="EMBL" id="AC092070">
    <property type="status" value="NOT_ANNOTATED_CDS"/>
    <property type="molecule type" value="Genomic_DNA"/>
</dbReference>
<dbReference type="IntAct" id="A6NNH2">
    <property type="interactions" value="1"/>
</dbReference>
<dbReference type="GlyGen" id="A6NNH2">
    <property type="glycosylation" value="1 site"/>
</dbReference>
<dbReference type="iPTMnet" id="A6NNH2"/>
<dbReference type="PhosphoSitePlus" id="A6NNH2"/>
<dbReference type="BioMuta" id="HGNC:43617"/>
<dbReference type="jPOST" id="A6NNH2"/>
<dbReference type="MassIVE" id="A6NNH2"/>
<dbReference type="PeptideAtlas" id="A6NNH2"/>
<dbReference type="AGR" id="HGNC:43617"/>
<dbReference type="GeneCards" id="FAM90A27P"/>
<dbReference type="HGNC" id="HGNC:43617">
    <property type="gene designation" value="FAM90A27P"/>
</dbReference>
<dbReference type="neXtProt" id="NX_A6NNH2"/>
<dbReference type="InParanoid" id="A6NNH2"/>
<dbReference type="PAN-GO" id="A6NNH2">
    <property type="GO annotations" value="0 GO annotations based on evolutionary models"/>
</dbReference>
<dbReference type="PhylomeDB" id="A6NNH2"/>
<dbReference type="PathwayCommons" id="A6NNH2"/>
<dbReference type="SignaLink" id="A6NNH2"/>
<dbReference type="Pharos" id="A6NNH2">
    <property type="development level" value="Tdark"/>
</dbReference>
<dbReference type="PRO" id="PR:A6NNH2"/>
<dbReference type="Proteomes" id="UP000005640">
    <property type="component" value="Unplaced"/>
</dbReference>
<dbReference type="RNAct" id="A6NNH2">
    <property type="molecule type" value="protein"/>
</dbReference>
<dbReference type="InterPro" id="IPR039213">
    <property type="entry name" value="FAM90"/>
</dbReference>
<dbReference type="InterPro" id="IPR041670">
    <property type="entry name" value="Znf-CCHC_6"/>
</dbReference>
<dbReference type="PANTHER" id="PTHR16035">
    <property type="entry name" value="PROTEIN FAM90A1"/>
    <property type="match status" value="1"/>
</dbReference>
<dbReference type="PANTHER" id="PTHR16035:SF16">
    <property type="entry name" value="PROTEIN FAM90A1-RELATED"/>
    <property type="match status" value="1"/>
</dbReference>
<dbReference type="Pfam" id="PF15288">
    <property type="entry name" value="zf-CCHC_6"/>
    <property type="match status" value="1"/>
</dbReference>
<feature type="chain" id="PRO_0000299600" description="Protein FAM90A27P">
    <location>
        <begin position="1"/>
        <end position="459"/>
    </location>
</feature>
<feature type="region of interest" description="Disordered" evidence="1">
    <location>
        <begin position="1"/>
        <end position="41"/>
    </location>
</feature>
<feature type="region of interest" description="Disordered" evidence="1">
    <location>
        <begin position="74"/>
        <end position="136"/>
    </location>
</feature>
<feature type="region of interest" description="Disordered" evidence="1">
    <location>
        <begin position="153"/>
        <end position="239"/>
    </location>
</feature>
<feature type="region of interest" description="Disordered" evidence="1">
    <location>
        <begin position="259"/>
        <end position="459"/>
    </location>
</feature>
<feature type="compositionally biased region" description="Basic residues" evidence="1">
    <location>
        <begin position="1"/>
        <end position="10"/>
    </location>
</feature>
<feature type="compositionally biased region" description="Basic and acidic residues" evidence="1">
    <location>
        <begin position="125"/>
        <end position="136"/>
    </location>
</feature>
<feature type="compositionally biased region" description="Polar residues" evidence="1">
    <location>
        <begin position="184"/>
        <end position="194"/>
    </location>
</feature>
<feature type="compositionally biased region" description="Low complexity" evidence="1">
    <location>
        <begin position="341"/>
        <end position="353"/>
    </location>
</feature>
<feature type="compositionally biased region" description="Polar residues" evidence="1">
    <location>
        <begin position="415"/>
        <end position="427"/>
    </location>
</feature>